<comment type="function">
    <text evidence="1">May catalyze the synthesis of indole-3-acetic acid (IAA)-amino acid conjugates, providing a mechanism for the plant to cope with the presence of excess auxin.</text>
</comment>
<comment type="tissue specificity">
    <text evidence="2">Ubiquitous.</text>
</comment>
<comment type="induction">
    <text evidence="2">At low level by auxin.</text>
</comment>
<comment type="similarity">
    <text evidence="3">Belongs to the IAA-amido conjugating enzyme family.</text>
</comment>
<comment type="sequence caution" evidence="3">
    <conflict type="erroneous gene model prediction">
        <sequence resource="EMBL-CDS" id="BAD45368"/>
    </conflict>
</comment>
<comment type="sequence caution" evidence="3">
    <conflict type="erroneous gene model prediction">
        <sequence resource="EMBL-CDS" id="BAD45740"/>
    </conflict>
</comment>
<protein>
    <recommendedName>
        <fullName>Probable indole-3-acetic acid-amido synthetase GH3.7</fullName>
        <ecNumber>6.3.2.-</ecNumber>
    </recommendedName>
    <alternativeName>
        <fullName>Auxin-responsive GH3-like protein 7</fullName>
        <shortName>OsGH3-7</shortName>
    </alternativeName>
</protein>
<evidence type="ECO:0000250" key="1"/>
<evidence type="ECO:0000269" key="2">
    <source>
    </source>
</evidence>
<evidence type="ECO:0000305" key="3"/>
<reference key="1">
    <citation type="journal article" date="2005" name="Nature">
        <title>The map-based sequence of the rice genome.</title>
        <authorList>
            <consortium name="International rice genome sequencing project (IRGSP)"/>
        </authorList>
    </citation>
    <scope>NUCLEOTIDE SEQUENCE [LARGE SCALE GENOMIC DNA]</scope>
    <source>
        <strain>cv. Nipponbare</strain>
    </source>
</reference>
<reference key="2">
    <citation type="journal article" date="2008" name="Nucleic Acids Res.">
        <title>The rice annotation project database (RAP-DB): 2008 update.</title>
        <authorList>
            <consortium name="The rice annotation project (RAP)"/>
        </authorList>
    </citation>
    <scope>GENOME REANNOTATION</scope>
    <source>
        <strain>cv. Nipponbare</strain>
    </source>
</reference>
<reference key="3">
    <citation type="journal article" date="2013" name="Rice">
        <title>Improvement of the Oryza sativa Nipponbare reference genome using next generation sequence and optical map data.</title>
        <authorList>
            <person name="Kawahara Y."/>
            <person name="de la Bastide M."/>
            <person name="Hamilton J.P."/>
            <person name="Kanamori H."/>
            <person name="McCombie W.R."/>
            <person name="Ouyang S."/>
            <person name="Schwartz D.C."/>
            <person name="Tanaka T."/>
            <person name="Wu J."/>
            <person name="Zhou S."/>
            <person name="Childs K.L."/>
            <person name="Davidson R.M."/>
            <person name="Lin H."/>
            <person name="Quesada-Ocampo L."/>
            <person name="Vaillancourt B."/>
            <person name="Sakai H."/>
            <person name="Lee S.S."/>
            <person name="Kim J."/>
            <person name="Numa H."/>
            <person name="Itoh T."/>
            <person name="Buell C.R."/>
            <person name="Matsumoto T."/>
        </authorList>
    </citation>
    <scope>GENOME REANNOTATION</scope>
    <source>
        <strain>cv. Nipponbare</strain>
    </source>
</reference>
<reference key="4">
    <citation type="journal article" date="2003" name="Science">
        <title>Collection, mapping, and annotation of over 28,000 cDNA clones from japonica rice.</title>
        <authorList>
            <consortium name="The rice full-length cDNA consortium"/>
        </authorList>
    </citation>
    <scope>NUCLEOTIDE SEQUENCE [LARGE SCALE MRNA]</scope>
    <source>
        <strain>cv. Nipponbare</strain>
    </source>
</reference>
<reference key="5">
    <citation type="journal article" date="2006" name="Funct. Integr. Genomics">
        <title>The auxin-responsive GH3 gene family in rice (Oryza sativa).</title>
        <authorList>
            <person name="Jain M."/>
            <person name="Kaur N."/>
            <person name="Tyagi A.K."/>
            <person name="Khurana J.P."/>
        </authorList>
    </citation>
    <scope>TISSUE SPECIFICITY</scope>
    <scope>INDUCTION</scope>
    <scope>NOMENCLATURE</scope>
</reference>
<gene>
    <name type="primary">GH3.7</name>
    <name type="ordered locus">Os06g0499500</name>
    <name type="ordered locus">LOC_Os06g30440</name>
    <name type="ORF">P0012H03.1-1</name>
    <name type="ORF">P0012H03.1-2</name>
    <name type="ORF">P0596H06.21-1</name>
    <name type="ORF">P0596H06.21-2</name>
</gene>
<organism>
    <name type="scientific">Oryza sativa subsp. japonica</name>
    <name type="common">Rice</name>
    <dbReference type="NCBI Taxonomy" id="39947"/>
    <lineage>
        <taxon>Eukaryota</taxon>
        <taxon>Viridiplantae</taxon>
        <taxon>Streptophyta</taxon>
        <taxon>Embryophyta</taxon>
        <taxon>Tracheophyta</taxon>
        <taxon>Spermatophyta</taxon>
        <taxon>Magnoliopsida</taxon>
        <taxon>Liliopsida</taxon>
        <taxon>Poales</taxon>
        <taxon>Poaceae</taxon>
        <taxon>BOP clade</taxon>
        <taxon>Oryzoideae</taxon>
        <taxon>Oryzeae</taxon>
        <taxon>Oryzinae</taxon>
        <taxon>Oryza</taxon>
        <taxon>Oryza sativa</taxon>
    </lineage>
</organism>
<feature type="chain" id="PRO_0000203584" description="Probable indole-3-acetic acid-amido synthetase GH3.7">
    <location>
        <begin position="1"/>
        <end position="620"/>
    </location>
</feature>
<keyword id="KW-0436">Ligase</keyword>
<keyword id="KW-1185">Reference proteome</keyword>
<sequence>MALLLPEFDPADVRAGRDLIHRLTADAAGIQRGVLREILSRNSGTEYLRRFLGGAAGDDDDVRDAFKRRVPVSGYEDVKPYVDRVASGGEPSSALLCSDPITCLSRSSGTSGGQQKLLPSTAEELDRKVFFYAVQALVRNMSLHTDHGEDDDGGGGEGMYLMFAFHGDRTLSGLPIQSALTTYYHSRQFQECDIGGFDKCTSPLEAILCPYGEQSMYCQLLCGLLHRCRVDRVGASFAAGLVRGIKFLENHWEEMCFNIRSGQLSDWITHTPLRDAVTGQYLQGSNPALADEIASECARKPWDGIVRRLWPRARYIRTIVTGSMSQYIPILEVYGGGLPLVSPIYASTECAAGINLRPLDPPSHVSYALLPNIAYFEFLEVMDENGEKVQGTTRLDDNLGEVKVVDLVDVKVGRCYELIVTTFAGLYRYRVGDLFTVSGFYNATPLFHFSGRHDVILSIDYEKISEEDLLNAIAETDKFHLRPLGYMLVGSTAYADISTLPGHYILFWELTNTCDSNVAIDIDQTAMEKCCLAVEDHFDEMYRKIRHRGSISALEIRILSHGAFDALMDFFVSRGTSASQYKTPTAIRSKEAMMVLEERVVGRFFSQATPSCRSAEFERR</sequence>
<proteinExistence type="evidence at transcript level"/>
<dbReference type="EC" id="6.3.2.-"/>
<dbReference type="EMBL" id="AP003620">
    <property type="protein sequence ID" value="BAD45367.1"/>
    <property type="molecule type" value="Genomic_DNA"/>
</dbReference>
<dbReference type="EMBL" id="AP003620">
    <property type="protein sequence ID" value="BAD45368.1"/>
    <property type="status" value="ALT_SEQ"/>
    <property type="molecule type" value="Genomic_DNA"/>
</dbReference>
<dbReference type="EMBL" id="AP004684">
    <property type="protein sequence ID" value="BAD45739.1"/>
    <property type="molecule type" value="Genomic_DNA"/>
</dbReference>
<dbReference type="EMBL" id="AP004684">
    <property type="protein sequence ID" value="BAD45740.1"/>
    <property type="status" value="ALT_SEQ"/>
    <property type="molecule type" value="Genomic_DNA"/>
</dbReference>
<dbReference type="EMBL" id="AP008212">
    <property type="protein sequence ID" value="BAF19618.1"/>
    <property type="molecule type" value="Genomic_DNA"/>
</dbReference>
<dbReference type="EMBL" id="AP014962">
    <property type="protein sequence ID" value="BAS97918.1"/>
    <property type="molecule type" value="Genomic_DNA"/>
</dbReference>
<dbReference type="EMBL" id="AK064372">
    <property type="protein sequence ID" value="BAG89086.1"/>
    <property type="molecule type" value="mRNA"/>
</dbReference>
<dbReference type="EMBL" id="AK099376">
    <property type="protein sequence ID" value="BAG94094.1"/>
    <property type="molecule type" value="mRNA"/>
</dbReference>
<dbReference type="RefSeq" id="XP_015641018.1">
    <property type="nucleotide sequence ID" value="XM_015785532.1"/>
</dbReference>
<dbReference type="SMR" id="Q654M1"/>
<dbReference type="FunCoup" id="Q654M1">
    <property type="interactions" value="126"/>
</dbReference>
<dbReference type="PaxDb" id="39947-Q654M1"/>
<dbReference type="EnsemblPlants" id="Os06t0499500-01">
    <property type="protein sequence ID" value="Os06t0499500-01"/>
    <property type="gene ID" value="Os06g0499500"/>
</dbReference>
<dbReference type="EnsemblPlants" id="Os06t0499500-03">
    <property type="protein sequence ID" value="Os06t0499500-03"/>
    <property type="gene ID" value="Os06g0499500"/>
</dbReference>
<dbReference type="Gramene" id="Os06t0499500-01">
    <property type="protein sequence ID" value="Os06t0499500-01"/>
    <property type="gene ID" value="Os06g0499500"/>
</dbReference>
<dbReference type="Gramene" id="Os06t0499500-03">
    <property type="protein sequence ID" value="Os06t0499500-03"/>
    <property type="gene ID" value="Os06g0499500"/>
</dbReference>
<dbReference type="KEGG" id="dosa:Os06g0499500"/>
<dbReference type="eggNOG" id="ENOG502QPMU">
    <property type="taxonomic scope" value="Eukaryota"/>
</dbReference>
<dbReference type="HOGENOM" id="CLU_016249_2_1_1"/>
<dbReference type="InParanoid" id="Q654M1"/>
<dbReference type="OMA" id="WITHTPL"/>
<dbReference type="OrthoDB" id="10004661at2759"/>
<dbReference type="Proteomes" id="UP000000763">
    <property type="component" value="Chromosome 6"/>
</dbReference>
<dbReference type="Proteomes" id="UP000059680">
    <property type="component" value="Chromosome 6"/>
</dbReference>
<dbReference type="ExpressionAtlas" id="Q654M1">
    <property type="expression patterns" value="baseline and differential"/>
</dbReference>
<dbReference type="GO" id="GO:0005737">
    <property type="term" value="C:cytoplasm"/>
    <property type="evidence" value="ECO:0000318"/>
    <property type="project" value="GO_Central"/>
</dbReference>
<dbReference type="GO" id="GO:0016881">
    <property type="term" value="F:acid-amino acid ligase activity"/>
    <property type="evidence" value="ECO:0000318"/>
    <property type="project" value="GO_Central"/>
</dbReference>
<dbReference type="GO" id="GO:0009733">
    <property type="term" value="P:response to auxin"/>
    <property type="evidence" value="ECO:0000305"/>
    <property type="project" value="Gramene"/>
</dbReference>
<dbReference type="GO" id="GO:0009416">
    <property type="term" value="P:response to light stimulus"/>
    <property type="evidence" value="ECO:0000305"/>
    <property type="project" value="Gramene"/>
</dbReference>
<dbReference type="InterPro" id="IPR004993">
    <property type="entry name" value="GH3"/>
</dbReference>
<dbReference type="InterPro" id="IPR055378">
    <property type="entry name" value="GH3_C"/>
</dbReference>
<dbReference type="InterPro" id="IPR055377">
    <property type="entry name" value="GH3_M"/>
</dbReference>
<dbReference type="PANTHER" id="PTHR31901">
    <property type="entry name" value="GH3 DOMAIN-CONTAINING PROTEIN"/>
    <property type="match status" value="1"/>
</dbReference>
<dbReference type="PANTHER" id="PTHR31901:SF14">
    <property type="entry name" value="INDOLE-3-ACETIC ACID-AMIDO SYNTHETASE GH3.7-RELATED"/>
    <property type="match status" value="1"/>
</dbReference>
<dbReference type="Pfam" id="PF03321">
    <property type="entry name" value="GH3"/>
    <property type="match status" value="1"/>
</dbReference>
<dbReference type="Pfam" id="PF23572">
    <property type="entry name" value="GH3_C"/>
    <property type="match status" value="1"/>
</dbReference>
<dbReference type="Pfam" id="PF23571">
    <property type="entry name" value="GH3_M"/>
    <property type="match status" value="1"/>
</dbReference>
<name>GH37_ORYSJ</name>
<accession>Q654M1</accession>
<accession>Q0DC05</accession>
<accession>Q654M2</accession>